<reference key="1">
    <citation type="journal article" date="2015" name="Genome Announc.">
        <title>Complete genome sequence of Anaeromyxobacter sp. Fw109-5, an anaerobic, metal-reducing bacterium isolated from a contaminated subsurface environment.</title>
        <authorList>
            <person name="Hwang C."/>
            <person name="Copeland A."/>
            <person name="Lucas S."/>
            <person name="Lapidus A."/>
            <person name="Barry K."/>
            <person name="Glavina Del Rio T."/>
            <person name="Dalin E."/>
            <person name="Tice H."/>
            <person name="Pitluck S."/>
            <person name="Sims D."/>
            <person name="Brettin T."/>
            <person name="Bruce D.C."/>
            <person name="Detter J.C."/>
            <person name="Han C.S."/>
            <person name="Schmutz J."/>
            <person name="Larimer F.W."/>
            <person name="Land M.L."/>
            <person name="Hauser L.J."/>
            <person name="Kyrpides N."/>
            <person name="Lykidis A."/>
            <person name="Richardson P."/>
            <person name="Belieav A."/>
            <person name="Sanford R.A."/>
            <person name="Loeffler F.E."/>
            <person name="Fields M.W."/>
        </authorList>
    </citation>
    <scope>NUCLEOTIDE SEQUENCE [LARGE SCALE GENOMIC DNA]</scope>
    <source>
        <strain>Fw109-5</strain>
    </source>
</reference>
<accession>A7HBF8</accession>
<proteinExistence type="inferred from homology"/>
<keyword id="KW-1185">Reference proteome</keyword>
<keyword id="KW-0687">Ribonucleoprotein</keyword>
<keyword id="KW-0689">Ribosomal protein</keyword>
<keyword id="KW-0694">RNA-binding</keyword>
<keyword id="KW-0699">rRNA-binding</keyword>
<dbReference type="EMBL" id="CP000769">
    <property type="protein sequence ID" value="ABS26054.1"/>
    <property type="molecule type" value="Genomic_DNA"/>
</dbReference>
<dbReference type="RefSeq" id="WP_012096632.1">
    <property type="nucleotide sequence ID" value="NC_009675.1"/>
</dbReference>
<dbReference type="SMR" id="A7HBF8"/>
<dbReference type="STRING" id="404589.Anae109_1851"/>
<dbReference type="KEGG" id="afw:Anae109_1851"/>
<dbReference type="eggNOG" id="COG0087">
    <property type="taxonomic scope" value="Bacteria"/>
</dbReference>
<dbReference type="HOGENOM" id="CLU_044142_4_1_7"/>
<dbReference type="OrthoDB" id="9806135at2"/>
<dbReference type="Proteomes" id="UP000006382">
    <property type="component" value="Chromosome"/>
</dbReference>
<dbReference type="GO" id="GO:0022625">
    <property type="term" value="C:cytosolic large ribosomal subunit"/>
    <property type="evidence" value="ECO:0007669"/>
    <property type="project" value="TreeGrafter"/>
</dbReference>
<dbReference type="GO" id="GO:0019843">
    <property type="term" value="F:rRNA binding"/>
    <property type="evidence" value="ECO:0007669"/>
    <property type="project" value="UniProtKB-UniRule"/>
</dbReference>
<dbReference type="GO" id="GO:0003735">
    <property type="term" value="F:structural constituent of ribosome"/>
    <property type="evidence" value="ECO:0007669"/>
    <property type="project" value="InterPro"/>
</dbReference>
<dbReference type="GO" id="GO:0006412">
    <property type="term" value="P:translation"/>
    <property type="evidence" value="ECO:0007669"/>
    <property type="project" value="UniProtKB-UniRule"/>
</dbReference>
<dbReference type="FunFam" id="2.40.30.10:FF:000004">
    <property type="entry name" value="50S ribosomal protein L3"/>
    <property type="match status" value="1"/>
</dbReference>
<dbReference type="FunFam" id="3.30.160.810:FF:000001">
    <property type="entry name" value="50S ribosomal protein L3"/>
    <property type="match status" value="1"/>
</dbReference>
<dbReference type="Gene3D" id="3.30.160.810">
    <property type="match status" value="1"/>
</dbReference>
<dbReference type="Gene3D" id="2.40.30.10">
    <property type="entry name" value="Translation factors"/>
    <property type="match status" value="1"/>
</dbReference>
<dbReference type="HAMAP" id="MF_01325_B">
    <property type="entry name" value="Ribosomal_uL3_B"/>
    <property type="match status" value="1"/>
</dbReference>
<dbReference type="InterPro" id="IPR000597">
    <property type="entry name" value="Ribosomal_uL3"/>
</dbReference>
<dbReference type="InterPro" id="IPR019927">
    <property type="entry name" value="Ribosomal_uL3_bac/org-type"/>
</dbReference>
<dbReference type="InterPro" id="IPR019926">
    <property type="entry name" value="Ribosomal_uL3_CS"/>
</dbReference>
<dbReference type="InterPro" id="IPR009000">
    <property type="entry name" value="Transl_B-barrel_sf"/>
</dbReference>
<dbReference type="NCBIfam" id="TIGR03625">
    <property type="entry name" value="L3_bact"/>
    <property type="match status" value="1"/>
</dbReference>
<dbReference type="PANTHER" id="PTHR11229">
    <property type="entry name" value="50S RIBOSOMAL PROTEIN L3"/>
    <property type="match status" value="1"/>
</dbReference>
<dbReference type="PANTHER" id="PTHR11229:SF16">
    <property type="entry name" value="LARGE RIBOSOMAL SUBUNIT PROTEIN UL3C"/>
    <property type="match status" value="1"/>
</dbReference>
<dbReference type="Pfam" id="PF00297">
    <property type="entry name" value="Ribosomal_L3"/>
    <property type="match status" value="1"/>
</dbReference>
<dbReference type="SUPFAM" id="SSF50447">
    <property type="entry name" value="Translation proteins"/>
    <property type="match status" value="1"/>
</dbReference>
<dbReference type="PROSITE" id="PS00474">
    <property type="entry name" value="RIBOSOMAL_L3"/>
    <property type="match status" value="1"/>
</dbReference>
<comment type="function">
    <text evidence="1">One of the primary rRNA binding proteins, it binds directly near the 3'-end of the 23S rRNA, where it nucleates assembly of the 50S subunit.</text>
</comment>
<comment type="subunit">
    <text evidence="1">Part of the 50S ribosomal subunit. Forms a cluster with proteins L14 and L19.</text>
</comment>
<comment type="similarity">
    <text evidence="1">Belongs to the universal ribosomal protein uL3 family.</text>
</comment>
<organism>
    <name type="scientific">Anaeromyxobacter sp. (strain Fw109-5)</name>
    <dbReference type="NCBI Taxonomy" id="404589"/>
    <lineage>
        <taxon>Bacteria</taxon>
        <taxon>Pseudomonadati</taxon>
        <taxon>Myxococcota</taxon>
        <taxon>Myxococcia</taxon>
        <taxon>Myxococcales</taxon>
        <taxon>Cystobacterineae</taxon>
        <taxon>Anaeromyxobacteraceae</taxon>
        <taxon>Anaeromyxobacter</taxon>
    </lineage>
</organism>
<feature type="chain" id="PRO_1000052007" description="Large ribosomal subunit protein uL3">
    <location>
        <begin position="1"/>
        <end position="236"/>
    </location>
</feature>
<feature type="region of interest" description="Disordered" evidence="2">
    <location>
        <begin position="139"/>
        <end position="163"/>
    </location>
</feature>
<sequence>MATGLLAKKLGMTQIFTAEGDCIPVTVLEAGPCTVVRRKTAEKDGYDAVVIGWGEVDEKHAHRLTKPEVGVFKKAGTPVFRHVKEIRVKDAKLLGELKAGDVLTVDKVFKQDQRIDVAGVTKGRGFTGVMKRWNMHGAARDSSTTHEHHRHVGAIGQRKTPGKVWKGKHLPGHYGVDNVTIQNLTIVGVEADKNLLLVKGAVPGHNDGLLFVNTAVKGQPRVKKVQEVRARAKPKV</sequence>
<name>RL3_ANADF</name>
<evidence type="ECO:0000255" key="1">
    <source>
        <dbReference type="HAMAP-Rule" id="MF_01325"/>
    </source>
</evidence>
<evidence type="ECO:0000256" key="2">
    <source>
        <dbReference type="SAM" id="MobiDB-lite"/>
    </source>
</evidence>
<evidence type="ECO:0000305" key="3"/>
<gene>
    <name evidence="1" type="primary">rplC</name>
    <name type="ordered locus">Anae109_1851</name>
</gene>
<protein>
    <recommendedName>
        <fullName evidence="1">Large ribosomal subunit protein uL3</fullName>
    </recommendedName>
    <alternativeName>
        <fullName evidence="3">50S ribosomal protein L3</fullName>
    </alternativeName>
</protein>